<gene>
    <name evidence="1" type="primary">rpoZ</name>
    <name type="ordered locus">Pfl01_5550</name>
</gene>
<evidence type="ECO:0000255" key="1">
    <source>
        <dbReference type="HAMAP-Rule" id="MF_00366"/>
    </source>
</evidence>
<keyword id="KW-0240">DNA-directed RNA polymerase</keyword>
<keyword id="KW-0548">Nucleotidyltransferase</keyword>
<keyword id="KW-0804">Transcription</keyword>
<keyword id="KW-0808">Transferase</keyword>
<sequence>MARVTVEDCLEHVENRFELVMLSTKRARQLATGGKEPLVQWENDKPTVVALREIAEGLMSYEFIAEQEIVHEDPVFAAFEDESNEAV</sequence>
<dbReference type="EC" id="2.7.7.6" evidence="1"/>
<dbReference type="EMBL" id="CP000094">
    <property type="protein sequence ID" value="ABA77287.1"/>
    <property type="molecule type" value="Genomic_DNA"/>
</dbReference>
<dbReference type="RefSeq" id="WP_003229503.1">
    <property type="nucleotide sequence ID" value="NC_007492.2"/>
</dbReference>
<dbReference type="SMR" id="Q3K4L7"/>
<dbReference type="KEGG" id="pfo:Pfl01_5550"/>
<dbReference type="eggNOG" id="COG1758">
    <property type="taxonomic scope" value="Bacteria"/>
</dbReference>
<dbReference type="HOGENOM" id="CLU_125406_5_2_6"/>
<dbReference type="Proteomes" id="UP000002704">
    <property type="component" value="Chromosome"/>
</dbReference>
<dbReference type="GO" id="GO:0000428">
    <property type="term" value="C:DNA-directed RNA polymerase complex"/>
    <property type="evidence" value="ECO:0007669"/>
    <property type="project" value="UniProtKB-KW"/>
</dbReference>
<dbReference type="GO" id="GO:0003677">
    <property type="term" value="F:DNA binding"/>
    <property type="evidence" value="ECO:0007669"/>
    <property type="project" value="UniProtKB-UniRule"/>
</dbReference>
<dbReference type="GO" id="GO:0003899">
    <property type="term" value="F:DNA-directed RNA polymerase activity"/>
    <property type="evidence" value="ECO:0007669"/>
    <property type="project" value="UniProtKB-UniRule"/>
</dbReference>
<dbReference type="GO" id="GO:0006351">
    <property type="term" value="P:DNA-templated transcription"/>
    <property type="evidence" value="ECO:0007669"/>
    <property type="project" value="UniProtKB-UniRule"/>
</dbReference>
<dbReference type="Gene3D" id="3.90.940.10">
    <property type="match status" value="1"/>
</dbReference>
<dbReference type="HAMAP" id="MF_00366">
    <property type="entry name" value="RNApol_bact_RpoZ"/>
    <property type="match status" value="1"/>
</dbReference>
<dbReference type="InterPro" id="IPR003716">
    <property type="entry name" value="DNA-dir_RNA_pol_omega"/>
</dbReference>
<dbReference type="InterPro" id="IPR006110">
    <property type="entry name" value="Pol_omega/Rpo6/RPB6"/>
</dbReference>
<dbReference type="InterPro" id="IPR036161">
    <property type="entry name" value="RPB6/omega-like_sf"/>
</dbReference>
<dbReference type="NCBIfam" id="TIGR00690">
    <property type="entry name" value="rpoZ"/>
    <property type="match status" value="1"/>
</dbReference>
<dbReference type="PANTHER" id="PTHR34476">
    <property type="entry name" value="DNA-DIRECTED RNA POLYMERASE SUBUNIT OMEGA"/>
    <property type="match status" value="1"/>
</dbReference>
<dbReference type="PANTHER" id="PTHR34476:SF1">
    <property type="entry name" value="DNA-DIRECTED RNA POLYMERASE SUBUNIT OMEGA"/>
    <property type="match status" value="1"/>
</dbReference>
<dbReference type="Pfam" id="PF01192">
    <property type="entry name" value="RNA_pol_Rpb6"/>
    <property type="match status" value="1"/>
</dbReference>
<dbReference type="SMART" id="SM01409">
    <property type="entry name" value="RNA_pol_Rpb6"/>
    <property type="match status" value="1"/>
</dbReference>
<dbReference type="SUPFAM" id="SSF63562">
    <property type="entry name" value="RPB6/omega subunit-like"/>
    <property type="match status" value="1"/>
</dbReference>
<accession>Q3K4L7</accession>
<proteinExistence type="inferred from homology"/>
<reference key="1">
    <citation type="journal article" date="2009" name="Genome Biol.">
        <title>Genomic and genetic analyses of diversity and plant interactions of Pseudomonas fluorescens.</title>
        <authorList>
            <person name="Silby M.W."/>
            <person name="Cerdeno-Tarraga A.M."/>
            <person name="Vernikos G.S."/>
            <person name="Giddens S.R."/>
            <person name="Jackson R.W."/>
            <person name="Preston G.M."/>
            <person name="Zhang X.-X."/>
            <person name="Moon C.D."/>
            <person name="Gehrig S.M."/>
            <person name="Godfrey S.A.C."/>
            <person name="Knight C.G."/>
            <person name="Malone J.G."/>
            <person name="Robinson Z."/>
            <person name="Spiers A.J."/>
            <person name="Harris S."/>
            <person name="Challis G.L."/>
            <person name="Yaxley A.M."/>
            <person name="Harris D."/>
            <person name="Seeger K."/>
            <person name="Murphy L."/>
            <person name="Rutter S."/>
            <person name="Squares R."/>
            <person name="Quail M.A."/>
            <person name="Saunders E."/>
            <person name="Mavromatis K."/>
            <person name="Brettin T.S."/>
            <person name="Bentley S.D."/>
            <person name="Hothersall J."/>
            <person name="Stephens E."/>
            <person name="Thomas C.M."/>
            <person name="Parkhill J."/>
            <person name="Levy S.B."/>
            <person name="Rainey P.B."/>
            <person name="Thomson N.R."/>
        </authorList>
    </citation>
    <scope>NUCLEOTIDE SEQUENCE [LARGE SCALE GENOMIC DNA]</scope>
    <source>
        <strain>Pf0-1</strain>
    </source>
</reference>
<comment type="function">
    <text evidence="1">Promotes RNA polymerase assembly. Latches the N- and C-terminal regions of the beta' subunit thereby facilitating its interaction with the beta and alpha subunits.</text>
</comment>
<comment type="catalytic activity">
    <reaction evidence="1">
        <text>RNA(n) + a ribonucleoside 5'-triphosphate = RNA(n+1) + diphosphate</text>
        <dbReference type="Rhea" id="RHEA:21248"/>
        <dbReference type="Rhea" id="RHEA-COMP:14527"/>
        <dbReference type="Rhea" id="RHEA-COMP:17342"/>
        <dbReference type="ChEBI" id="CHEBI:33019"/>
        <dbReference type="ChEBI" id="CHEBI:61557"/>
        <dbReference type="ChEBI" id="CHEBI:140395"/>
        <dbReference type="EC" id="2.7.7.6"/>
    </reaction>
</comment>
<comment type="subunit">
    <text evidence="1">The RNAP catalytic core consists of 2 alpha, 1 beta, 1 beta' and 1 omega subunit. When a sigma factor is associated with the core the holoenzyme is formed, which can initiate transcription.</text>
</comment>
<comment type="similarity">
    <text evidence="1">Belongs to the RNA polymerase subunit omega family.</text>
</comment>
<organism>
    <name type="scientific">Pseudomonas fluorescens (strain Pf0-1)</name>
    <dbReference type="NCBI Taxonomy" id="205922"/>
    <lineage>
        <taxon>Bacteria</taxon>
        <taxon>Pseudomonadati</taxon>
        <taxon>Pseudomonadota</taxon>
        <taxon>Gammaproteobacteria</taxon>
        <taxon>Pseudomonadales</taxon>
        <taxon>Pseudomonadaceae</taxon>
        <taxon>Pseudomonas</taxon>
    </lineage>
</organism>
<name>RPOZ_PSEPF</name>
<feature type="chain" id="PRO_0000237491" description="DNA-directed RNA polymerase subunit omega">
    <location>
        <begin position="1"/>
        <end position="87"/>
    </location>
</feature>
<protein>
    <recommendedName>
        <fullName evidence="1">DNA-directed RNA polymerase subunit omega</fullName>
        <shortName evidence="1">RNAP omega subunit</shortName>
        <ecNumber evidence="1">2.7.7.6</ecNumber>
    </recommendedName>
    <alternativeName>
        <fullName evidence="1">RNA polymerase omega subunit</fullName>
    </alternativeName>
    <alternativeName>
        <fullName evidence="1">Transcriptase subunit omega</fullName>
    </alternativeName>
</protein>